<dbReference type="EC" id="3.6.4.13"/>
<dbReference type="EMBL" id="CP009811">
    <property type="protein sequence ID" value="ATZ51830.1"/>
    <property type="molecule type" value="Genomic_DNA"/>
</dbReference>
<dbReference type="RefSeq" id="XP_001546999.1">
    <property type="nucleotide sequence ID" value="XM_001546949.1"/>
</dbReference>
<dbReference type="SMR" id="A6SNX1"/>
<dbReference type="EnsemblFungi" id="Bcin07g03950.1">
    <property type="protein sequence ID" value="Bcin07p03950.1"/>
    <property type="gene ID" value="Bcin07g03950"/>
</dbReference>
<dbReference type="GeneID" id="5427456"/>
<dbReference type="KEGG" id="bfu:BCIN_07g03950"/>
<dbReference type="VEuPathDB" id="FungiDB:Bcin07g03950"/>
<dbReference type="OrthoDB" id="1191041at2759"/>
<dbReference type="Proteomes" id="UP000001798">
    <property type="component" value="Chromosome bcin07"/>
</dbReference>
<dbReference type="GO" id="GO:0005829">
    <property type="term" value="C:cytosol"/>
    <property type="evidence" value="ECO:0007669"/>
    <property type="project" value="TreeGrafter"/>
</dbReference>
<dbReference type="GO" id="GO:0005730">
    <property type="term" value="C:nucleolus"/>
    <property type="evidence" value="ECO:0007669"/>
    <property type="project" value="UniProtKB-SubCell"/>
</dbReference>
<dbReference type="GO" id="GO:0005524">
    <property type="term" value="F:ATP binding"/>
    <property type="evidence" value="ECO:0007669"/>
    <property type="project" value="UniProtKB-KW"/>
</dbReference>
<dbReference type="GO" id="GO:0016887">
    <property type="term" value="F:ATP hydrolysis activity"/>
    <property type="evidence" value="ECO:0007669"/>
    <property type="project" value="RHEA"/>
</dbReference>
<dbReference type="GO" id="GO:0003678">
    <property type="term" value="F:DNA helicase activity"/>
    <property type="evidence" value="ECO:0007669"/>
    <property type="project" value="EnsemblFungi"/>
</dbReference>
<dbReference type="GO" id="GO:0033677">
    <property type="term" value="F:DNA/RNA helicase activity"/>
    <property type="evidence" value="ECO:0007669"/>
    <property type="project" value="EnsemblFungi"/>
</dbReference>
<dbReference type="GO" id="GO:0003723">
    <property type="term" value="F:RNA binding"/>
    <property type="evidence" value="ECO:0007669"/>
    <property type="project" value="UniProtKB-KW"/>
</dbReference>
<dbReference type="GO" id="GO:0003724">
    <property type="term" value="F:RNA helicase activity"/>
    <property type="evidence" value="ECO:0007669"/>
    <property type="project" value="UniProtKB-EC"/>
</dbReference>
<dbReference type="GO" id="GO:0000463">
    <property type="term" value="P:maturation of LSU-rRNA from tricistronic rRNA transcript (SSU-rRNA, 5.8S rRNA, LSU-rRNA)"/>
    <property type="evidence" value="ECO:0007669"/>
    <property type="project" value="EnsemblFungi"/>
</dbReference>
<dbReference type="CDD" id="cd17961">
    <property type="entry name" value="DEADc_DDX56"/>
    <property type="match status" value="1"/>
</dbReference>
<dbReference type="CDD" id="cd18787">
    <property type="entry name" value="SF2_C_DEAD"/>
    <property type="match status" value="1"/>
</dbReference>
<dbReference type="Gene3D" id="3.40.50.300">
    <property type="entry name" value="P-loop containing nucleotide triphosphate hydrolases"/>
    <property type="match status" value="2"/>
</dbReference>
<dbReference type="InterPro" id="IPR011545">
    <property type="entry name" value="DEAD/DEAH_box_helicase_dom"/>
</dbReference>
<dbReference type="InterPro" id="IPR050079">
    <property type="entry name" value="DEAD_box_RNA_helicase"/>
</dbReference>
<dbReference type="InterPro" id="IPR014001">
    <property type="entry name" value="Helicase_ATP-bd"/>
</dbReference>
<dbReference type="InterPro" id="IPR001650">
    <property type="entry name" value="Helicase_C-like"/>
</dbReference>
<dbReference type="InterPro" id="IPR027417">
    <property type="entry name" value="P-loop_NTPase"/>
</dbReference>
<dbReference type="InterPro" id="IPR014014">
    <property type="entry name" value="RNA_helicase_DEAD_Q_motif"/>
</dbReference>
<dbReference type="PANTHER" id="PTHR47959">
    <property type="entry name" value="ATP-DEPENDENT RNA HELICASE RHLE-RELATED"/>
    <property type="match status" value="1"/>
</dbReference>
<dbReference type="PANTHER" id="PTHR47959:SF21">
    <property type="entry name" value="DEAD-BOX HELICASE 56"/>
    <property type="match status" value="1"/>
</dbReference>
<dbReference type="Pfam" id="PF00270">
    <property type="entry name" value="DEAD"/>
    <property type="match status" value="1"/>
</dbReference>
<dbReference type="Pfam" id="PF00271">
    <property type="entry name" value="Helicase_C"/>
    <property type="match status" value="2"/>
</dbReference>
<dbReference type="SMART" id="SM00487">
    <property type="entry name" value="DEXDc"/>
    <property type="match status" value="1"/>
</dbReference>
<dbReference type="SMART" id="SM00490">
    <property type="entry name" value="HELICc"/>
    <property type="match status" value="1"/>
</dbReference>
<dbReference type="SUPFAM" id="SSF52540">
    <property type="entry name" value="P-loop containing nucleoside triphosphate hydrolases"/>
    <property type="match status" value="2"/>
</dbReference>
<dbReference type="PROSITE" id="PS51192">
    <property type="entry name" value="HELICASE_ATP_BIND_1"/>
    <property type="match status" value="1"/>
</dbReference>
<dbReference type="PROSITE" id="PS51194">
    <property type="entry name" value="HELICASE_CTER"/>
    <property type="match status" value="1"/>
</dbReference>
<dbReference type="PROSITE" id="PS51195">
    <property type="entry name" value="Q_MOTIF"/>
    <property type="match status" value="1"/>
</dbReference>
<proteinExistence type="inferred from homology"/>
<feature type="chain" id="PRO_0000310255" description="ATP-dependent RNA helicase dbp9">
    <location>
        <begin position="1"/>
        <end position="607"/>
    </location>
</feature>
<feature type="domain" description="Helicase ATP-binding" evidence="2">
    <location>
        <begin position="55"/>
        <end position="232"/>
    </location>
</feature>
<feature type="domain" description="Helicase C-terminal" evidence="3">
    <location>
        <begin position="243"/>
        <end position="475"/>
    </location>
</feature>
<feature type="region of interest" description="Disordered" evidence="4">
    <location>
        <begin position="332"/>
        <end position="380"/>
    </location>
</feature>
<feature type="region of interest" description="Disordered" evidence="4">
    <location>
        <begin position="573"/>
        <end position="607"/>
    </location>
</feature>
<feature type="short sequence motif" description="Q motif">
    <location>
        <begin position="24"/>
        <end position="52"/>
    </location>
</feature>
<feature type="short sequence motif" description="DEAD box">
    <location>
        <begin position="180"/>
        <end position="183"/>
    </location>
</feature>
<feature type="compositionally biased region" description="Basic and acidic residues" evidence="4">
    <location>
        <begin position="332"/>
        <end position="343"/>
    </location>
</feature>
<feature type="compositionally biased region" description="Acidic residues" evidence="4">
    <location>
        <begin position="344"/>
        <end position="356"/>
    </location>
</feature>
<feature type="compositionally biased region" description="Basic and acidic residues" evidence="4">
    <location>
        <begin position="357"/>
        <end position="368"/>
    </location>
</feature>
<feature type="compositionally biased region" description="Basic residues" evidence="4">
    <location>
        <begin position="578"/>
        <end position="592"/>
    </location>
</feature>
<feature type="binding site" evidence="2">
    <location>
        <begin position="68"/>
        <end position="75"/>
    </location>
    <ligand>
        <name>ATP</name>
        <dbReference type="ChEBI" id="CHEBI:30616"/>
    </ligand>
</feature>
<accession>A6SNX1</accession>
<accession>A0A384JMU5</accession>
<reference key="1">
    <citation type="journal article" date="2011" name="PLoS Genet.">
        <title>Genomic analysis of the necrotrophic fungal pathogens Sclerotinia sclerotiorum and Botrytis cinerea.</title>
        <authorList>
            <person name="Amselem J."/>
            <person name="Cuomo C.A."/>
            <person name="van Kan J.A.L."/>
            <person name="Viaud M."/>
            <person name="Benito E.P."/>
            <person name="Couloux A."/>
            <person name="Coutinho P.M."/>
            <person name="de Vries R.P."/>
            <person name="Dyer P.S."/>
            <person name="Fillinger S."/>
            <person name="Fournier E."/>
            <person name="Gout L."/>
            <person name="Hahn M."/>
            <person name="Kohn L."/>
            <person name="Lapalu N."/>
            <person name="Plummer K.M."/>
            <person name="Pradier J.-M."/>
            <person name="Quevillon E."/>
            <person name="Sharon A."/>
            <person name="Simon A."/>
            <person name="ten Have A."/>
            <person name="Tudzynski B."/>
            <person name="Tudzynski P."/>
            <person name="Wincker P."/>
            <person name="Andrew M."/>
            <person name="Anthouard V."/>
            <person name="Beever R.E."/>
            <person name="Beffa R."/>
            <person name="Benoit I."/>
            <person name="Bouzid O."/>
            <person name="Brault B."/>
            <person name="Chen Z."/>
            <person name="Choquer M."/>
            <person name="Collemare J."/>
            <person name="Cotton P."/>
            <person name="Danchin E.G."/>
            <person name="Da Silva C."/>
            <person name="Gautier A."/>
            <person name="Giraud C."/>
            <person name="Giraud T."/>
            <person name="Gonzalez C."/>
            <person name="Grossetete S."/>
            <person name="Gueldener U."/>
            <person name="Henrissat B."/>
            <person name="Howlett B.J."/>
            <person name="Kodira C."/>
            <person name="Kretschmer M."/>
            <person name="Lappartient A."/>
            <person name="Leroch M."/>
            <person name="Levis C."/>
            <person name="Mauceli E."/>
            <person name="Neuveglise C."/>
            <person name="Oeser B."/>
            <person name="Pearson M."/>
            <person name="Poulain J."/>
            <person name="Poussereau N."/>
            <person name="Quesneville H."/>
            <person name="Rascle C."/>
            <person name="Schumacher J."/>
            <person name="Segurens B."/>
            <person name="Sexton A."/>
            <person name="Silva E."/>
            <person name="Sirven C."/>
            <person name="Soanes D.M."/>
            <person name="Talbot N.J."/>
            <person name="Templeton M."/>
            <person name="Yandava C."/>
            <person name="Yarden O."/>
            <person name="Zeng Q."/>
            <person name="Rollins J.A."/>
            <person name="Lebrun M.-H."/>
            <person name="Dickman M."/>
        </authorList>
    </citation>
    <scope>NUCLEOTIDE SEQUENCE [LARGE SCALE GENOMIC DNA]</scope>
    <source>
        <strain>B05.10</strain>
    </source>
</reference>
<reference key="2">
    <citation type="journal article" date="2012" name="Eukaryot. Cell">
        <title>Genome update of Botrytis cinerea strains B05.10 and T4.</title>
        <authorList>
            <person name="Staats M."/>
            <person name="van Kan J.A.L."/>
        </authorList>
    </citation>
    <scope>NUCLEOTIDE SEQUENCE [LARGE SCALE GENOMIC DNA]</scope>
    <scope>GENOME REANNOTATION</scope>
    <source>
        <strain>B05.10</strain>
    </source>
</reference>
<reference key="3">
    <citation type="journal article" date="2017" name="Mol. Plant Pathol.">
        <title>A gapless genome sequence of the fungus Botrytis cinerea.</title>
        <authorList>
            <person name="van Kan J.A.L."/>
            <person name="Stassen J.H.M."/>
            <person name="Mosbach A."/>
            <person name="van der Lee T.A.J."/>
            <person name="Faino L."/>
            <person name="Farmer A.D."/>
            <person name="Papasotiriou D.G."/>
            <person name="Zhou S."/>
            <person name="Seidl M.F."/>
            <person name="Cottam E."/>
            <person name="Edel D."/>
            <person name="Hahn M."/>
            <person name="Schwartz D.C."/>
            <person name="Dietrich R.A."/>
            <person name="Widdison S."/>
            <person name="Scalliet G."/>
        </authorList>
    </citation>
    <scope>NUCLEOTIDE SEQUENCE [LARGE SCALE GENOMIC DNA]</scope>
    <scope>GENOME REANNOTATION</scope>
    <source>
        <strain>B05.10</strain>
    </source>
</reference>
<gene>
    <name type="primary">dbp9</name>
    <name type="ORF">BC1G_14464</name>
    <name type="ORF">BCIN_07g03950</name>
</gene>
<keyword id="KW-0067">ATP-binding</keyword>
<keyword id="KW-0347">Helicase</keyword>
<keyword id="KW-0378">Hydrolase</keyword>
<keyword id="KW-0547">Nucleotide-binding</keyword>
<keyword id="KW-0539">Nucleus</keyword>
<keyword id="KW-1185">Reference proteome</keyword>
<keyword id="KW-0690">Ribosome biogenesis</keyword>
<keyword id="KW-0694">RNA-binding</keyword>
<keyword id="KW-0698">rRNA processing</keyword>
<evidence type="ECO:0000250" key="1"/>
<evidence type="ECO:0000255" key="2">
    <source>
        <dbReference type="PROSITE-ProRule" id="PRU00541"/>
    </source>
</evidence>
<evidence type="ECO:0000255" key="3">
    <source>
        <dbReference type="PROSITE-ProRule" id="PRU00542"/>
    </source>
</evidence>
<evidence type="ECO:0000256" key="4">
    <source>
        <dbReference type="SAM" id="MobiDB-lite"/>
    </source>
</evidence>
<evidence type="ECO:0000305" key="5"/>
<protein>
    <recommendedName>
        <fullName>ATP-dependent RNA helicase dbp9</fullName>
        <ecNumber>3.6.4.13</ecNumber>
    </recommendedName>
</protein>
<organism>
    <name type="scientific">Botryotinia fuckeliana (strain B05.10)</name>
    <name type="common">Noble rot fungus</name>
    <name type="synonym">Botrytis cinerea</name>
    <dbReference type="NCBI Taxonomy" id="332648"/>
    <lineage>
        <taxon>Eukaryota</taxon>
        <taxon>Fungi</taxon>
        <taxon>Dikarya</taxon>
        <taxon>Ascomycota</taxon>
        <taxon>Pezizomycotina</taxon>
        <taxon>Leotiomycetes</taxon>
        <taxon>Helotiales</taxon>
        <taxon>Sclerotiniaceae</taxon>
        <taxon>Botrytis</taxon>
    </lineage>
</organism>
<name>DBP9_BOTFB</name>
<sequence>MKRKLDANDVPVPTEGSDAIKENVTFASLGLDARLLQGIAKQNFQSPTLVQSKAIPLTLEGRDILARAKTGSGKTAAYLLPILHSILKRKELSSTQCTTALILVPTRELADQVYKTVESFTAFCAKDVRAVNLTQRVSDAVQRSLLADSPDIVIATPARASLNANTSALSLANLTHMVIDEADLVLSYGYDEDLQNVAKIMPKGVQTVLMSATLTSEVETLKGLFCRNPEVLKLEEAEDEGEGVSQFVVKCAEDEKFLLTYVIFKLKLIKGKCIIFVGDIDRCYRLKLFLEQFGTRSCILNSQLPVNSRIHVVEEFNKNVYDIIIASDEHEVLGDEDEPKSGDAEEVEADDADEEKEDAKDAKKETKQPSKKKQKTGKKDKEYGVSRGIDFKNVACVLNFDLPTSSKSYTHRIGRTARAGQTGMALSFVIPSEQYRKHKPTSIESAKNDEKVLAKIVKHQAKKGKEVKPYNFDMKQVDAFRYRMGDALRAVTSIAVQEAKTREIRQELMKSDKLKRHFEENPGDLYHLRHDGELRPARVQAHLKHVPDYLLPKEGKKGITGGDVGFVGMHKTTENRIRKARAANKAKGRGKGRKSDPLKTFKAKSKK</sequence>
<comment type="function">
    <text evidence="1">ATP-binding RNA helicase involved in the biogenesis of 60S ribosomal subunits and is required for the normal formation of 25S and 5.8S rRNAs.</text>
</comment>
<comment type="catalytic activity">
    <reaction>
        <text>ATP + H2O = ADP + phosphate + H(+)</text>
        <dbReference type="Rhea" id="RHEA:13065"/>
        <dbReference type="ChEBI" id="CHEBI:15377"/>
        <dbReference type="ChEBI" id="CHEBI:15378"/>
        <dbReference type="ChEBI" id="CHEBI:30616"/>
        <dbReference type="ChEBI" id="CHEBI:43474"/>
        <dbReference type="ChEBI" id="CHEBI:456216"/>
        <dbReference type="EC" id="3.6.4.13"/>
    </reaction>
</comment>
<comment type="subcellular location">
    <subcellularLocation>
        <location evidence="1">Nucleus</location>
        <location evidence="1">Nucleolus</location>
    </subcellularLocation>
</comment>
<comment type="domain">
    <text>The Q motif is unique to and characteristic of the DEAD box family of RNA helicases and controls ATP binding and hydrolysis.</text>
</comment>
<comment type="similarity">
    <text evidence="5">Belongs to the DEAD box helicase family. DDX56/DBP9 subfamily.</text>
</comment>